<feature type="chain" id="PRO_0000281950" description="Putative F-box/LRR-repeat protein At3g42770">
    <location>
        <begin position="1"/>
        <end position="532"/>
    </location>
</feature>
<feature type="domain" description="F-box" evidence="1">
    <location>
        <begin position="1"/>
        <end position="46"/>
    </location>
</feature>
<feature type="repeat" description="LRR 1">
    <location>
        <begin position="113"/>
        <end position="135"/>
    </location>
</feature>
<feature type="repeat" description="LRR 2">
    <location>
        <begin position="279"/>
        <end position="305"/>
    </location>
</feature>
<feature type="repeat" description="LRR 3">
    <location>
        <begin position="398"/>
        <end position="420"/>
    </location>
</feature>
<protein>
    <recommendedName>
        <fullName>Putative F-box/LRR-repeat protein At3g42770</fullName>
    </recommendedName>
</protein>
<sequence length="532" mass="60931">MNCLPDELLVQILSFLPTKEATSTSLLSKRWRTLFTLSPNLDFDNSLLLQSKKRKWNMRNIQKSFVGFVDSTLALQGGKGIKSFSLKFKETLGDVNGEVDVNRWICNALEHGVSELHLRIDYTKRCHLPSEIFTSTKLVKLSLVTQSCFPVVPNCISLPSLKVLFLDSIWFEVPQFLIFLTACPALEDLTIYQKPHSVGMPYHISSKTIKRLSVTYTCGYFVDYGLKLFNTPSVVDLYYSDYVRHKYPHMNLDSLPKATLDIHFLDDNAANVTELLSGIRNVKTLHLTSSTVKVILLCCKGEIPMFENLINLKFSGKTRQWKFLLPLLLEICPNLTTLVLSGLDQNWFVGFRTPPNNQVKMLSIMQYQGSERELKLISYFVLKMECLQVVKVYVSSPMNDLKKMQLTEDLLKLPKASPKLNIQVLVPSDTYLPALKVLFLDSVWFDFHQFANVFFPACPALEDFAIHIKSFRRKARSENELEHISHFSLKMEFLEVLKVYVALTMDDTKKVELTKELLKLPISSSKLIIQVM</sequence>
<reference key="1">
    <citation type="journal article" date="2000" name="Nature">
        <title>Sequence and analysis of chromosome 3 of the plant Arabidopsis thaliana.</title>
        <authorList>
            <person name="Salanoubat M."/>
            <person name="Lemcke K."/>
            <person name="Rieger M."/>
            <person name="Ansorge W."/>
            <person name="Unseld M."/>
            <person name="Fartmann B."/>
            <person name="Valle G."/>
            <person name="Bloecker H."/>
            <person name="Perez-Alonso M."/>
            <person name="Obermaier B."/>
            <person name="Delseny M."/>
            <person name="Boutry M."/>
            <person name="Grivell L.A."/>
            <person name="Mache R."/>
            <person name="Puigdomenech P."/>
            <person name="De Simone V."/>
            <person name="Choisne N."/>
            <person name="Artiguenave F."/>
            <person name="Robert C."/>
            <person name="Brottier P."/>
            <person name="Wincker P."/>
            <person name="Cattolico L."/>
            <person name="Weissenbach J."/>
            <person name="Saurin W."/>
            <person name="Quetier F."/>
            <person name="Schaefer M."/>
            <person name="Mueller-Auer S."/>
            <person name="Gabel C."/>
            <person name="Fuchs M."/>
            <person name="Benes V."/>
            <person name="Wurmbach E."/>
            <person name="Drzonek H."/>
            <person name="Erfle H."/>
            <person name="Jordan N."/>
            <person name="Bangert S."/>
            <person name="Wiedelmann R."/>
            <person name="Kranz H."/>
            <person name="Voss H."/>
            <person name="Holland R."/>
            <person name="Brandt P."/>
            <person name="Nyakatura G."/>
            <person name="Vezzi A."/>
            <person name="D'Angelo M."/>
            <person name="Pallavicini A."/>
            <person name="Toppo S."/>
            <person name="Simionati B."/>
            <person name="Conrad A."/>
            <person name="Hornischer K."/>
            <person name="Kauer G."/>
            <person name="Loehnert T.-H."/>
            <person name="Nordsiek G."/>
            <person name="Reichelt J."/>
            <person name="Scharfe M."/>
            <person name="Schoen O."/>
            <person name="Bargues M."/>
            <person name="Terol J."/>
            <person name="Climent J."/>
            <person name="Navarro P."/>
            <person name="Collado C."/>
            <person name="Perez-Perez A."/>
            <person name="Ottenwaelder B."/>
            <person name="Duchemin D."/>
            <person name="Cooke R."/>
            <person name="Laudie M."/>
            <person name="Berger-Llauro C."/>
            <person name="Purnelle B."/>
            <person name="Masuy D."/>
            <person name="de Haan M."/>
            <person name="Maarse A.C."/>
            <person name="Alcaraz J.-P."/>
            <person name="Cottet A."/>
            <person name="Casacuberta E."/>
            <person name="Monfort A."/>
            <person name="Argiriou A."/>
            <person name="Flores M."/>
            <person name="Liguori R."/>
            <person name="Vitale D."/>
            <person name="Mannhaupt G."/>
            <person name="Haase D."/>
            <person name="Schoof H."/>
            <person name="Rudd S."/>
            <person name="Zaccaria P."/>
            <person name="Mewes H.-W."/>
            <person name="Mayer K.F.X."/>
            <person name="Kaul S."/>
            <person name="Town C.D."/>
            <person name="Koo H.L."/>
            <person name="Tallon L.J."/>
            <person name="Jenkins J."/>
            <person name="Rooney T."/>
            <person name="Rizzo M."/>
            <person name="Walts A."/>
            <person name="Utterback T."/>
            <person name="Fujii C.Y."/>
            <person name="Shea T.P."/>
            <person name="Creasy T.H."/>
            <person name="Haas B."/>
            <person name="Maiti R."/>
            <person name="Wu D."/>
            <person name="Peterson J."/>
            <person name="Van Aken S."/>
            <person name="Pai G."/>
            <person name="Militscher J."/>
            <person name="Sellers P."/>
            <person name="Gill J.E."/>
            <person name="Feldblyum T.V."/>
            <person name="Preuss D."/>
            <person name="Lin X."/>
            <person name="Nierman W.C."/>
            <person name="Salzberg S.L."/>
            <person name="White O."/>
            <person name="Venter J.C."/>
            <person name="Fraser C.M."/>
            <person name="Kaneko T."/>
            <person name="Nakamura Y."/>
            <person name="Sato S."/>
            <person name="Kato T."/>
            <person name="Asamizu E."/>
            <person name="Sasamoto S."/>
            <person name="Kimura T."/>
            <person name="Idesawa K."/>
            <person name="Kawashima K."/>
            <person name="Kishida Y."/>
            <person name="Kiyokawa C."/>
            <person name="Kohara M."/>
            <person name="Matsumoto M."/>
            <person name="Matsuno A."/>
            <person name="Muraki A."/>
            <person name="Nakayama S."/>
            <person name="Nakazaki N."/>
            <person name="Shinpo S."/>
            <person name="Takeuchi C."/>
            <person name="Wada T."/>
            <person name="Watanabe A."/>
            <person name="Yamada M."/>
            <person name="Yasuda M."/>
            <person name="Tabata S."/>
        </authorList>
    </citation>
    <scope>NUCLEOTIDE SEQUENCE [LARGE SCALE GENOMIC DNA]</scope>
    <source>
        <strain>cv. Columbia</strain>
    </source>
</reference>
<reference key="2">
    <citation type="journal article" date="2017" name="Plant J.">
        <title>Araport11: a complete reannotation of the Arabidopsis thaliana reference genome.</title>
        <authorList>
            <person name="Cheng C.Y."/>
            <person name="Krishnakumar V."/>
            <person name="Chan A.P."/>
            <person name="Thibaud-Nissen F."/>
            <person name="Schobel S."/>
            <person name="Town C.D."/>
        </authorList>
    </citation>
    <scope>GENOME REANNOTATION</scope>
    <source>
        <strain>cv. Columbia</strain>
    </source>
</reference>
<keyword id="KW-0433">Leucine-rich repeat</keyword>
<keyword id="KW-1185">Reference proteome</keyword>
<keyword id="KW-0677">Repeat</keyword>
<accession>Q9M190</accession>
<evidence type="ECO:0000255" key="1">
    <source>
        <dbReference type="PROSITE-ProRule" id="PRU00080"/>
    </source>
</evidence>
<organism>
    <name type="scientific">Arabidopsis thaliana</name>
    <name type="common">Mouse-ear cress</name>
    <dbReference type="NCBI Taxonomy" id="3702"/>
    <lineage>
        <taxon>Eukaryota</taxon>
        <taxon>Viridiplantae</taxon>
        <taxon>Streptophyta</taxon>
        <taxon>Embryophyta</taxon>
        <taxon>Tracheophyta</taxon>
        <taxon>Spermatophyta</taxon>
        <taxon>Magnoliopsida</taxon>
        <taxon>eudicotyledons</taxon>
        <taxon>Gunneridae</taxon>
        <taxon>Pentapetalae</taxon>
        <taxon>rosids</taxon>
        <taxon>malvids</taxon>
        <taxon>Brassicales</taxon>
        <taxon>Brassicaceae</taxon>
        <taxon>Camelineae</taxon>
        <taxon>Arabidopsis</taxon>
    </lineage>
</organism>
<name>FBL49_ARATH</name>
<gene>
    <name type="ordered locus">At3g42770</name>
    <name type="ORF">F7P3.60</name>
</gene>
<dbReference type="EMBL" id="AL138663">
    <property type="protein sequence ID" value="CAB86697.1"/>
    <property type="molecule type" value="Genomic_DNA"/>
</dbReference>
<dbReference type="EMBL" id="CP002686">
    <property type="protein sequence ID" value="AEE77749.1"/>
    <property type="molecule type" value="Genomic_DNA"/>
</dbReference>
<dbReference type="PIR" id="T47335">
    <property type="entry name" value="T47335"/>
</dbReference>
<dbReference type="RefSeq" id="NP_189863.1">
    <property type="nucleotide sequence ID" value="NM_114145.1"/>
</dbReference>
<dbReference type="iPTMnet" id="Q9M190"/>
<dbReference type="PaxDb" id="3702-AT3G42770.1"/>
<dbReference type="EnsemblPlants" id="AT3G42770.1">
    <property type="protein sequence ID" value="AT3G42770.1"/>
    <property type="gene ID" value="AT3G42770"/>
</dbReference>
<dbReference type="GeneID" id="823312"/>
<dbReference type="Gramene" id="AT3G42770.1">
    <property type="protein sequence ID" value="AT3G42770.1"/>
    <property type="gene ID" value="AT3G42770"/>
</dbReference>
<dbReference type="KEGG" id="ath:AT3G42770"/>
<dbReference type="Araport" id="AT3G42770"/>
<dbReference type="TAIR" id="AT3G42770">
    <property type="gene designation" value="PRU1"/>
</dbReference>
<dbReference type="HOGENOM" id="CLU_010721_7_0_1"/>
<dbReference type="InParanoid" id="Q9M190"/>
<dbReference type="OMA" id="PRASTNC"/>
<dbReference type="PhylomeDB" id="Q9M190"/>
<dbReference type="PRO" id="PR:Q9M190"/>
<dbReference type="Proteomes" id="UP000006548">
    <property type="component" value="Chromosome 3"/>
</dbReference>
<dbReference type="ExpressionAtlas" id="Q9M190">
    <property type="expression patterns" value="baseline and differential"/>
</dbReference>
<dbReference type="GO" id="GO:0061630">
    <property type="term" value="F:ubiquitin protein ligase activity"/>
    <property type="evidence" value="ECO:0000315"/>
    <property type="project" value="TAIR"/>
</dbReference>
<dbReference type="GO" id="GO:0016036">
    <property type="term" value="P:cellular response to phosphate starvation"/>
    <property type="evidence" value="ECO:0000315"/>
    <property type="project" value="TAIR"/>
</dbReference>
<dbReference type="GO" id="GO:0000209">
    <property type="term" value="P:protein polyubiquitination"/>
    <property type="evidence" value="ECO:0000315"/>
    <property type="project" value="TAIR"/>
</dbReference>
<dbReference type="CDD" id="cd22160">
    <property type="entry name" value="F-box_AtFBL13-like"/>
    <property type="match status" value="1"/>
</dbReference>
<dbReference type="Gene3D" id="1.20.1280.50">
    <property type="match status" value="1"/>
</dbReference>
<dbReference type="InterPro" id="IPR036047">
    <property type="entry name" value="F-box-like_dom_sf"/>
</dbReference>
<dbReference type="InterPro" id="IPR053781">
    <property type="entry name" value="F-box_AtFBL13-like"/>
</dbReference>
<dbReference type="InterPro" id="IPR001810">
    <property type="entry name" value="F-box_dom"/>
</dbReference>
<dbReference type="InterPro" id="IPR006566">
    <property type="entry name" value="FBD"/>
</dbReference>
<dbReference type="InterPro" id="IPR055294">
    <property type="entry name" value="FBL60-like"/>
</dbReference>
<dbReference type="InterPro" id="IPR055411">
    <property type="entry name" value="LRR_FXL15/At3g58940/PEG3-like"/>
</dbReference>
<dbReference type="InterPro" id="IPR013101">
    <property type="entry name" value="LRR_PRU1-like"/>
</dbReference>
<dbReference type="PANTHER" id="PTHR31293">
    <property type="entry name" value="RNI-LIKE SUPERFAMILY PROTEIN"/>
    <property type="match status" value="1"/>
</dbReference>
<dbReference type="PANTHER" id="PTHR31293:SF12">
    <property type="entry name" value="RNI-LIKE SUPERFAMILY PROTEIN"/>
    <property type="match status" value="1"/>
</dbReference>
<dbReference type="Pfam" id="PF00646">
    <property type="entry name" value="F-box"/>
    <property type="match status" value="1"/>
</dbReference>
<dbReference type="Pfam" id="PF07723">
    <property type="entry name" value="LRR_2"/>
    <property type="match status" value="1"/>
</dbReference>
<dbReference type="Pfam" id="PF24758">
    <property type="entry name" value="LRR_At5g56370"/>
    <property type="match status" value="1"/>
</dbReference>
<dbReference type="SMART" id="SM00579">
    <property type="entry name" value="FBD"/>
    <property type="match status" value="2"/>
</dbReference>
<dbReference type="SMART" id="SM00256">
    <property type="entry name" value="FBOX"/>
    <property type="match status" value="1"/>
</dbReference>
<dbReference type="SUPFAM" id="SSF81383">
    <property type="entry name" value="F-box domain"/>
    <property type="match status" value="1"/>
</dbReference>
<dbReference type="SUPFAM" id="SSF52047">
    <property type="entry name" value="RNI-like"/>
    <property type="match status" value="1"/>
</dbReference>
<dbReference type="PROSITE" id="PS50181">
    <property type="entry name" value="FBOX"/>
    <property type="match status" value="1"/>
</dbReference>
<proteinExistence type="predicted"/>